<gene>
    <name evidence="3" type="primary">fruB</name>
    <name type="ordered locus">Z3427</name>
    <name type="ordered locus">ECs3061</name>
</gene>
<evidence type="ECO:0000250" key="1">
    <source>
        <dbReference type="UniProtKB" id="P17127"/>
    </source>
</evidence>
<evidence type="ECO:0000250" key="2">
    <source>
        <dbReference type="UniProtKB" id="P44715"/>
    </source>
</evidence>
<evidence type="ECO:0000250" key="3">
    <source>
        <dbReference type="UniProtKB" id="P69811"/>
    </source>
</evidence>
<evidence type="ECO:0000255" key="4">
    <source>
        <dbReference type="PROSITE-ProRule" id="PRU00417"/>
    </source>
</evidence>
<evidence type="ECO:0000255" key="5">
    <source>
        <dbReference type="PROSITE-ProRule" id="PRU00681"/>
    </source>
</evidence>
<evidence type="ECO:0000305" key="6"/>
<reference key="1">
    <citation type="journal article" date="2001" name="Nature">
        <title>Genome sequence of enterohaemorrhagic Escherichia coli O157:H7.</title>
        <authorList>
            <person name="Perna N.T."/>
            <person name="Plunkett G. III"/>
            <person name="Burland V."/>
            <person name="Mau B."/>
            <person name="Glasner J.D."/>
            <person name="Rose D.J."/>
            <person name="Mayhew G.F."/>
            <person name="Evans P.S."/>
            <person name="Gregor J."/>
            <person name="Kirkpatrick H.A."/>
            <person name="Posfai G."/>
            <person name="Hackett J."/>
            <person name="Klink S."/>
            <person name="Boutin A."/>
            <person name="Shao Y."/>
            <person name="Miller L."/>
            <person name="Grotbeck E.J."/>
            <person name="Davis N.W."/>
            <person name="Lim A."/>
            <person name="Dimalanta E.T."/>
            <person name="Potamousis K."/>
            <person name="Apodaca J."/>
            <person name="Anantharaman T.S."/>
            <person name="Lin J."/>
            <person name="Yen G."/>
            <person name="Schwartz D.C."/>
            <person name="Welch R.A."/>
            <person name="Blattner F.R."/>
        </authorList>
    </citation>
    <scope>NUCLEOTIDE SEQUENCE [LARGE SCALE GENOMIC DNA]</scope>
    <source>
        <strain>O157:H7 / EDL933 / ATCC 700927 / EHEC</strain>
    </source>
</reference>
<reference key="2">
    <citation type="journal article" date="2001" name="DNA Res.">
        <title>Complete genome sequence of enterohemorrhagic Escherichia coli O157:H7 and genomic comparison with a laboratory strain K-12.</title>
        <authorList>
            <person name="Hayashi T."/>
            <person name="Makino K."/>
            <person name="Ohnishi M."/>
            <person name="Kurokawa K."/>
            <person name="Ishii K."/>
            <person name="Yokoyama K."/>
            <person name="Han C.-G."/>
            <person name="Ohtsubo E."/>
            <person name="Nakayama K."/>
            <person name="Murata T."/>
            <person name="Tanaka M."/>
            <person name="Tobe T."/>
            <person name="Iida T."/>
            <person name="Takami H."/>
            <person name="Honda T."/>
            <person name="Sasakawa C."/>
            <person name="Ogasawara N."/>
            <person name="Yasunaga T."/>
            <person name="Kuhara S."/>
            <person name="Shiba T."/>
            <person name="Hattori M."/>
            <person name="Shinagawa H."/>
        </authorList>
    </citation>
    <scope>NUCLEOTIDE SEQUENCE [LARGE SCALE GENOMIC DNA]</scope>
    <source>
        <strain>O157:H7 / Sakai / RIMD 0509952 / EHEC</strain>
    </source>
</reference>
<keyword id="KW-0963">Cytoplasm</keyword>
<keyword id="KW-0418">Kinase</keyword>
<keyword id="KW-0597">Phosphoprotein</keyword>
<keyword id="KW-0598">Phosphotransferase system</keyword>
<keyword id="KW-1185">Reference proteome</keyword>
<keyword id="KW-0762">Sugar transport</keyword>
<keyword id="KW-0808">Transferase</keyword>
<keyword id="KW-0813">Transport</keyword>
<sequence length="376" mass="39648">MFQLSVQDIHPGEKAGDKEEAIRQVAAALVQAGNVAEGYVNGMLAREQQTSTFLGNGIAIPHGTTDTRDQVLKTGVQVFQFPEGVTWGDGQVAYVAIGIAASSDEHLGLLRQLTHVLSDDSVAEQLKSATTAEELRALLMGEKQSEQLKLDNEMLTLDIVASDLLTLQALNAARLKEAGAVDATFVTKAINEQPLNLGQGIWLSDSAEGNLRSAIAVSRAANAFDVDGETAAMLVSVAMNDDQPIAVLKRLADLLLDNKADRLLKADAATLLALLTSDDAPTDDVLSAEFVVRNEHGLHARPGTMLVNTIKQFNSDITVTNLDGTGKPANGRSLMKVVALGVKKGHRLRFTAQGADAEQALKAIGDAIAAGLGEGA</sequence>
<name>PTFAH_ECO57</name>
<proteinExistence type="inferred from homology"/>
<feature type="chain" id="PRO_0000186517" description="Multiphosphoryl transfer protein">
    <location>
        <begin position="1"/>
        <end position="376"/>
    </location>
</feature>
<feature type="domain" description="PTS EIIA type-2" evidence="4">
    <location>
        <begin position="2"/>
        <end position="142"/>
    </location>
</feature>
<feature type="domain" description="HPr" evidence="5">
    <location>
        <begin position="285"/>
        <end position="375"/>
    </location>
</feature>
<feature type="region of interest" description="M domain" evidence="2">
    <location>
        <begin position="156"/>
        <end position="284"/>
    </location>
</feature>
<feature type="active site" description="Tele-phosphohistidine intermediate; for EIIA activity" evidence="4">
    <location>
        <position position="62"/>
    </location>
</feature>
<feature type="active site" description="Pros-phosphohistidine intermediate; for HPr activity" evidence="5">
    <location>
        <position position="299"/>
    </location>
</feature>
<feature type="modified residue" description="Phosphohistidine; by HPr" evidence="6">
    <location>
        <position position="62"/>
    </location>
</feature>
<feature type="modified residue" description="Phosphohistidine; by EI" evidence="6">
    <location>
        <position position="299"/>
    </location>
</feature>
<organism>
    <name type="scientific">Escherichia coli O157:H7</name>
    <dbReference type="NCBI Taxonomy" id="83334"/>
    <lineage>
        <taxon>Bacteria</taxon>
        <taxon>Pseudomonadati</taxon>
        <taxon>Pseudomonadota</taxon>
        <taxon>Gammaproteobacteria</taxon>
        <taxon>Enterobacterales</taxon>
        <taxon>Enterobacteriaceae</taxon>
        <taxon>Escherichia</taxon>
    </lineage>
</organism>
<dbReference type="EMBL" id="AE005174">
    <property type="protein sequence ID" value="AAG57307.1"/>
    <property type="molecule type" value="Genomic_DNA"/>
</dbReference>
<dbReference type="EMBL" id="BA000007">
    <property type="protein sequence ID" value="BAB36484.1"/>
    <property type="molecule type" value="Genomic_DNA"/>
</dbReference>
<dbReference type="PIR" id="E91011">
    <property type="entry name" value="E91011"/>
</dbReference>
<dbReference type="RefSeq" id="NP_311088.1">
    <property type="nucleotide sequence ID" value="NC_002695.1"/>
</dbReference>
<dbReference type="RefSeq" id="WP_000487246.1">
    <property type="nucleotide sequence ID" value="NZ_VOAI01000001.1"/>
</dbReference>
<dbReference type="SMR" id="P69812"/>
<dbReference type="STRING" id="155864.Z3427"/>
<dbReference type="GeneID" id="75206422"/>
<dbReference type="GeneID" id="916765"/>
<dbReference type="KEGG" id="ece:Z3427"/>
<dbReference type="KEGG" id="ecs:ECs_3061"/>
<dbReference type="PATRIC" id="fig|386585.9.peg.3190"/>
<dbReference type="eggNOG" id="COG1925">
    <property type="taxonomic scope" value="Bacteria"/>
</dbReference>
<dbReference type="eggNOG" id="COG4668">
    <property type="taxonomic scope" value="Bacteria"/>
</dbReference>
<dbReference type="HOGENOM" id="CLU_046384_0_0_6"/>
<dbReference type="OMA" id="WGEGNIA"/>
<dbReference type="Proteomes" id="UP000000558">
    <property type="component" value="Chromosome"/>
</dbReference>
<dbReference type="Proteomes" id="UP000002519">
    <property type="component" value="Chromosome"/>
</dbReference>
<dbReference type="GO" id="GO:0005737">
    <property type="term" value="C:cytoplasm"/>
    <property type="evidence" value="ECO:0007669"/>
    <property type="project" value="UniProtKB-SubCell"/>
</dbReference>
<dbReference type="GO" id="GO:0005886">
    <property type="term" value="C:plasma membrane"/>
    <property type="evidence" value="ECO:0007669"/>
    <property type="project" value="TreeGrafter"/>
</dbReference>
<dbReference type="GO" id="GO:0016301">
    <property type="term" value="F:kinase activity"/>
    <property type="evidence" value="ECO:0007669"/>
    <property type="project" value="UniProtKB-KW"/>
</dbReference>
<dbReference type="GO" id="GO:0090563">
    <property type="term" value="F:protein-phosphocysteine-sugar phosphotransferase activity"/>
    <property type="evidence" value="ECO:0007669"/>
    <property type="project" value="TreeGrafter"/>
</dbReference>
<dbReference type="GO" id="GO:0009401">
    <property type="term" value="P:phosphoenolpyruvate-dependent sugar phosphotransferase system"/>
    <property type="evidence" value="ECO:0007669"/>
    <property type="project" value="UniProtKB-KW"/>
</dbReference>
<dbReference type="CDD" id="cd00367">
    <property type="entry name" value="PTS-HPr_like"/>
    <property type="match status" value="1"/>
</dbReference>
<dbReference type="CDD" id="cd00211">
    <property type="entry name" value="PTS_IIA_fru"/>
    <property type="match status" value="1"/>
</dbReference>
<dbReference type="FunFam" id="3.30.1340.10:FF:000005">
    <property type="entry name" value="Fructose-specific PTS system IIA component"/>
    <property type="match status" value="1"/>
</dbReference>
<dbReference type="FunFam" id="3.40.930.10:FF:000006">
    <property type="entry name" value="Fructose-specific PTS system IIA component"/>
    <property type="match status" value="1"/>
</dbReference>
<dbReference type="Gene3D" id="3.30.1340.10">
    <property type="entry name" value="HPr-like"/>
    <property type="match status" value="1"/>
</dbReference>
<dbReference type="Gene3D" id="3.40.930.10">
    <property type="entry name" value="Mannitol-specific EII, Chain A"/>
    <property type="match status" value="1"/>
</dbReference>
<dbReference type="InterPro" id="IPR000032">
    <property type="entry name" value="HPr-like"/>
</dbReference>
<dbReference type="InterPro" id="IPR035895">
    <property type="entry name" value="HPr-like_sf"/>
</dbReference>
<dbReference type="InterPro" id="IPR016152">
    <property type="entry name" value="PTrfase/Anion_transptr"/>
</dbReference>
<dbReference type="InterPro" id="IPR002178">
    <property type="entry name" value="PTS_EIIA_type-2_dom"/>
</dbReference>
<dbReference type="InterPro" id="IPR001020">
    <property type="entry name" value="PTS_HPr_His_P_site"/>
</dbReference>
<dbReference type="InterPro" id="IPR002114">
    <property type="entry name" value="PTS_HPr_Ser_P_site"/>
</dbReference>
<dbReference type="InterPro" id="IPR050893">
    <property type="entry name" value="Sugar_PTS"/>
</dbReference>
<dbReference type="NCBIfam" id="NF008319">
    <property type="entry name" value="PRK11109.1"/>
    <property type="match status" value="1"/>
</dbReference>
<dbReference type="NCBIfam" id="TIGR01003">
    <property type="entry name" value="PTS_HPr_family"/>
    <property type="match status" value="1"/>
</dbReference>
<dbReference type="PANTHER" id="PTHR30181">
    <property type="entry name" value="MANNITOL PERMEASE IIC COMPONENT"/>
    <property type="match status" value="1"/>
</dbReference>
<dbReference type="PANTHER" id="PTHR30181:SF3">
    <property type="entry name" value="MULTIPHOSPHORYL TRANSFER PROTEIN"/>
    <property type="match status" value="1"/>
</dbReference>
<dbReference type="Pfam" id="PF00381">
    <property type="entry name" value="PTS-HPr"/>
    <property type="match status" value="1"/>
</dbReference>
<dbReference type="Pfam" id="PF00359">
    <property type="entry name" value="PTS_EIIA_2"/>
    <property type="match status" value="1"/>
</dbReference>
<dbReference type="PRINTS" id="PR00107">
    <property type="entry name" value="PHOSPHOCPHPR"/>
</dbReference>
<dbReference type="SUPFAM" id="SSF55594">
    <property type="entry name" value="HPr-like"/>
    <property type="match status" value="1"/>
</dbReference>
<dbReference type="SUPFAM" id="SSF55804">
    <property type="entry name" value="Phoshotransferase/anion transport protein"/>
    <property type="match status" value="2"/>
</dbReference>
<dbReference type="PROSITE" id="PS51094">
    <property type="entry name" value="PTS_EIIA_TYPE_2"/>
    <property type="match status" value="1"/>
</dbReference>
<dbReference type="PROSITE" id="PS00372">
    <property type="entry name" value="PTS_EIIA_TYPE_2_HIS"/>
    <property type="match status" value="1"/>
</dbReference>
<dbReference type="PROSITE" id="PS51350">
    <property type="entry name" value="PTS_HPR_DOM"/>
    <property type="match status" value="1"/>
</dbReference>
<dbReference type="PROSITE" id="PS00369">
    <property type="entry name" value="PTS_HPR_HIS"/>
    <property type="match status" value="1"/>
</dbReference>
<dbReference type="PROSITE" id="PS00589">
    <property type="entry name" value="PTS_HPR_SER"/>
    <property type="match status" value="1"/>
</dbReference>
<protein>
    <recommendedName>
        <fullName evidence="2">Multiphosphoryl transfer protein</fullName>
        <shortName evidence="2">MTP</shortName>
    </recommendedName>
    <alternativeName>
        <fullName evidence="3">Diphosphoryl transfer protein</fullName>
        <shortName evidence="3">DTP</shortName>
    </alternativeName>
    <alternativeName>
        <fullName evidence="1">Phosphotransferase FPr protein</fullName>
    </alternativeName>
    <alternativeName>
        <fullName evidence="1">Pseudo-HPr</fullName>
    </alternativeName>
    <domain>
        <recommendedName>
            <fullName evidence="1">Phosphocarrier protein HPr</fullName>
            <shortName evidence="1">Protein H</shortName>
        </recommendedName>
    </domain>
    <domain>
        <recommendedName>
            <fullName evidence="3">PTS system fructose-specific EIIA component</fullName>
        </recommendedName>
        <alternativeName>
            <fullName evidence="1">EIIA-Fru</fullName>
        </alternativeName>
        <alternativeName>
            <fullName evidence="1">EIII-Fru</fullName>
        </alternativeName>
        <alternativeName>
            <fullName evidence="3">Fructose-specific phosphotransferase enzyme IIA component</fullName>
        </alternativeName>
    </domain>
</protein>
<comment type="function">
    <text evidence="3">The phosphoenolpyruvate-dependent sugar phosphotransferase system (sugar PTS), a major carbohydrate active transport system, catalyzes the phosphorylation of incoming sugar substrates concomitantly with their translocation across the cell membrane. The enzyme II FruAB PTS system is involved in fructose transport.</text>
</comment>
<comment type="subcellular location">
    <subcellularLocation>
        <location evidence="6">Cytoplasm</location>
    </subcellularLocation>
</comment>
<comment type="induction">
    <text evidence="1">Induced by fructose and repressed by FruR.</text>
</comment>
<comment type="domain">
    <text evidence="4">The PTS EIIA type-2 domain is phosphorylated by phospho-HPr on a histidyl residue. Then, it transfers the phosphoryl group to the PTS EIIB type-2 domain.</text>
</comment>
<comment type="domain">
    <text evidence="3">In contrast to classical PTS systems, the fructose-specific PTS has no requirement for HPr; FruB combines a IIA domain with a HPr domain.</text>
</comment>
<accession>P69812</accession>
<accession>P24217</accession>
<accession>P94759</accession>